<protein>
    <recommendedName>
        <fullName>Neurotoxin 3</fullName>
        <shortName>Toxin 3</shortName>
    </recommendedName>
</protein>
<reference key="1">
    <citation type="journal article" date="1994" name="Toxicon">
        <title>The amino acid sequences of two postsynaptic neurotoxins isolated from Malayan cobra (Naja naja sputatrix) venom.</title>
        <authorList>
            <person name="Chung M.C.M."/>
            <person name="Tan N.-H."/>
            <person name="Armugam A."/>
        </authorList>
    </citation>
    <scope>PROTEIN SEQUENCE</scope>
    <scope>TOXIC DOSE</scope>
    <scope>SUBCELLULAR LOCATION</scope>
    <source>
        <tissue>Venom</tissue>
    </source>
</reference>
<proteinExistence type="evidence at protein level"/>
<accession>Q9PSN6</accession>
<name>3S13_NAJSP</name>
<dbReference type="BMRB" id="Q9PSN6"/>
<dbReference type="SMR" id="Q9PSN6"/>
<dbReference type="GO" id="GO:0005576">
    <property type="term" value="C:extracellular region"/>
    <property type="evidence" value="ECO:0007669"/>
    <property type="project" value="UniProtKB-SubCell"/>
</dbReference>
<dbReference type="GO" id="GO:0030550">
    <property type="term" value="F:acetylcholine receptor inhibitor activity"/>
    <property type="evidence" value="ECO:0007669"/>
    <property type="project" value="UniProtKB-KW"/>
</dbReference>
<dbReference type="GO" id="GO:0099106">
    <property type="term" value="F:ion channel regulator activity"/>
    <property type="evidence" value="ECO:0007669"/>
    <property type="project" value="UniProtKB-KW"/>
</dbReference>
<dbReference type="GO" id="GO:0090729">
    <property type="term" value="F:toxin activity"/>
    <property type="evidence" value="ECO:0007669"/>
    <property type="project" value="UniProtKB-KW"/>
</dbReference>
<dbReference type="CDD" id="cd00206">
    <property type="entry name" value="TFP_snake_toxin"/>
    <property type="match status" value="1"/>
</dbReference>
<dbReference type="FunFam" id="2.10.60.10:FF:000024">
    <property type="entry name" value="Cytotoxin 1"/>
    <property type="match status" value="1"/>
</dbReference>
<dbReference type="Gene3D" id="2.10.60.10">
    <property type="entry name" value="CD59"/>
    <property type="match status" value="1"/>
</dbReference>
<dbReference type="InterPro" id="IPR003571">
    <property type="entry name" value="Snake_3FTx"/>
</dbReference>
<dbReference type="InterPro" id="IPR045860">
    <property type="entry name" value="Snake_toxin-like_sf"/>
</dbReference>
<dbReference type="InterPro" id="IPR018354">
    <property type="entry name" value="Snake_toxin_con_site"/>
</dbReference>
<dbReference type="InterPro" id="IPR054131">
    <property type="entry name" value="Toxin_cobra-type"/>
</dbReference>
<dbReference type="Pfam" id="PF21947">
    <property type="entry name" value="Toxin_cobra-type"/>
    <property type="match status" value="1"/>
</dbReference>
<dbReference type="SUPFAM" id="SSF57302">
    <property type="entry name" value="Snake toxin-like"/>
    <property type="match status" value="1"/>
</dbReference>
<dbReference type="PROSITE" id="PS00272">
    <property type="entry name" value="SNAKE_TOXIN"/>
    <property type="match status" value="1"/>
</dbReference>
<feature type="chain" id="PRO_0000093611" description="Neurotoxin 3" evidence="4">
    <location>
        <begin position="1"/>
        <end position="62"/>
    </location>
</feature>
<feature type="region of interest" description="Disordered" evidence="3">
    <location>
        <begin position="1"/>
        <end position="22"/>
    </location>
</feature>
<feature type="compositionally biased region" description="Polar residues" evidence="3">
    <location>
        <begin position="1"/>
        <end position="16"/>
    </location>
</feature>
<feature type="disulfide bond" evidence="1">
    <location>
        <begin position="3"/>
        <end position="24"/>
    </location>
</feature>
<feature type="disulfide bond" evidence="1">
    <location>
        <begin position="17"/>
        <end position="41"/>
    </location>
</feature>
<feature type="disulfide bond" evidence="1">
    <location>
        <begin position="43"/>
        <end position="54"/>
    </location>
</feature>
<feature type="disulfide bond" evidence="1">
    <location>
        <begin position="55"/>
        <end position="60"/>
    </location>
</feature>
<comment type="function">
    <text evidence="2">Binds to muscle nicotinic acetylcholine receptor (nAChR) and inhibit acetylcholine from binding to the receptor, thereby impairing neuromuscular transmission.</text>
</comment>
<comment type="subcellular location">
    <subcellularLocation>
        <location evidence="4">Secreted</location>
    </subcellularLocation>
</comment>
<comment type="tissue specificity">
    <text evidence="5">Expressed by the venom gland.</text>
</comment>
<comment type="toxic dose">
    <text evidence="4">LD(50) is 0.12 mg/kg by intravenous injection into mice.</text>
</comment>
<comment type="similarity">
    <text evidence="5">Belongs to the three-finger toxin family. Short-chain subfamily. Type I alpha-neurotoxin sub-subfamily.</text>
</comment>
<evidence type="ECO:0000250" key="1">
    <source>
        <dbReference type="UniProtKB" id="P0C1Z0"/>
    </source>
</evidence>
<evidence type="ECO:0000250" key="2">
    <source>
        <dbReference type="UniProtKB" id="P60775"/>
    </source>
</evidence>
<evidence type="ECO:0000256" key="3">
    <source>
        <dbReference type="SAM" id="MobiDB-lite"/>
    </source>
</evidence>
<evidence type="ECO:0000269" key="4">
    <source>
    </source>
</evidence>
<evidence type="ECO:0000305" key="5"/>
<keyword id="KW-0008">Acetylcholine receptor inhibiting toxin</keyword>
<keyword id="KW-0903">Direct protein sequencing</keyword>
<keyword id="KW-1015">Disulfide bond</keyword>
<keyword id="KW-0872">Ion channel impairing toxin</keyword>
<keyword id="KW-0528">Neurotoxin</keyword>
<keyword id="KW-0629">Postsynaptic neurotoxin</keyword>
<keyword id="KW-0964">Secreted</keyword>
<keyword id="KW-0800">Toxin</keyword>
<sequence length="62" mass="6958">LECHDQQSSQTPTTTGCSGGETNCYKKRWRDHRGYRTERGCGCPSVKNGIEINCCTTDRCNN</sequence>
<organism>
    <name type="scientific">Naja sputatrix</name>
    <name type="common">Malayan spitting cobra</name>
    <name type="synonym">Naja naja sputatrix</name>
    <dbReference type="NCBI Taxonomy" id="33626"/>
    <lineage>
        <taxon>Eukaryota</taxon>
        <taxon>Metazoa</taxon>
        <taxon>Chordata</taxon>
        <taxon>Craniata</taxon>
        <taxon>Vertebrata</taxon>
        <taxon>Euteleostomi</taxon>
        <taxon>Lepidosauria</taxon>
        <taxon>Squamata</taxon>
        <taxon>Bifurcata</taxon>
        <taxon>Unidentata</taxon>
        <taxon>Episquamata</taxon>
        <taxon>Toxicofera</taxon>
        <taxon>Serpentes</taxon>
        <taxon>Colubroidea</taxon>
        <taxon>Elapidae</taxon>
        <taxon>Elapinae</taxon>
        <taxon>Naja</taxon>
    </lineage>
</organism>